<evidence type="ECO:0000255" key="1">
    <source>
        <dbReference type="HAMAP-Rule" id="MF_03039"/>
    </source>
</evidence>
<feature type="chain" id="PRO_0000382721" description="Cytosolic Fe-S cluster assembly factor NUBP2 homolog">
    <location>
        <begin position="1"/>
        <end position="270"/>
    </location>
</feature>
<feature type="binding site" evidence="1">
    <location>
        <begin position="21"/>
        <end position="28"/>
    </location>
    <ligand>
        <name>ATP</name>
        <dbReference type="ChEBI" id="CHEBI:30616"/>
    </ligand>
</feature>
<feature type="binding site" evidence="1">
    <location>
        <position position="195"/>
    </location>
    <ligand>
        <name>[4Fe-4S] cluster</name>
        <dbReference type="ChEBI" id="CHEBI:49883"/>
        <note>ligand shared between dimeric partners</note>
    </ligand>
</feature>
<feature type="binding site" evidence="1">
    <location>
        <position position="198"/>
    </location>
    <ligand>
        <name>[4Fe-4S] cluster</name>
        <dbReference type="ChEBI" id="CHEBI:49883"/>
        <note>ligand shared between dimeric partners</note>
    </ligand>
</feature>
<organism>
    <name type="scientific">Nematostella vectensis</name>
    <name type="common">Starlet sea anemone</name>
    <dbReference type="NCBI Taxonomy" id="45351"/>
    <lineage>
        <taxon>Eukaryota</taxon>
        <taxon>Metazoa</taxon>
        <taxon>Cnidaria</taxon>
        <taxon>Anthozoa</taxon>
        <taxon>Hexacorallia</taxon>
        <taxon>Actiniaria</taxon>
        <taxon>Edwardsiidae</taxon>
        <taxon>Nematostella</taxon>
    </lineage>
</organism>
<protein>
    <recommendedName>
        <fullName evidence="1">Cytosolic Fe-S cluster assembly factor NUBP2 homolog</fullName>
    </recommendedName>
</protein>
<gene>
    <name type="ORF">v1g229988</name>
</gene>
<sequence>MCVVVPQGLRSVKHIILVLSGKGGVGKSTVATQLSWALYNQGNKVGLLDIDLCGPSIPRMMNVENNDVHQCSDGWVPVYTGPDQRLGVMSIGFLLHSKEDAVVWRGPKKNAMIKQFLSDVCWGDIDYLIIDTPPGTSDEHITVVENLKTCHPDGAILVTTPQGVAISDVRREITFCKKTKIPVLGIVENMSGFVCPHCSECTNVFSKGGGEALAKECEVPFLGCIPLDPNLTMNIEDGKSFSDLLSNSPAVESVNSIVTKISHATSQNQT</sequence>
<proteinExistence type="inferred from homology"/>
<name>NUBP2_NEMVE</name>
<dbReference type="EMBL" id="DS469633">
    <property type="protein sequence ID" value="EDO38107.1"/>
    <property type="molecule type" value="Genomic_DNA"/>
</dbReference>
<dbReference type="RefSeq" id="XP_001630170.1">
    <property type="nucleotide sequence ID" value="XM_001630120.1"/>
</dbReference>
<dbReference type="SMR" id="A7SE07"/>
<dbReference type="FunCoup" id="A7SE07">
    <property type="interactions" value="178"/>
</dbReference>
<dbReference type="STRING" id="45351.A7SE07"/>
<dbReference type="EnsemblMetazoa" id="EDO38107">
    <property type="protein sequence ID" value="EDO38107"/>
    <property type="gene ID" value="NEMVEDRAFT_v1g229988"/>
</dbReference>
<dbReference type="KEGG" id="nve:5509652"/>
<dbReference type="eggNOG" id="KOG3022">
    <property type="taxonomic scope" value="Eukaryota"/>
</dbReference>
<dbReference type="HOGENOM" id="CLU_024839_0_1_1"/>
<dbReference type="InParanoid" id="A7SE07"/>
<dbReference type="OMA" id="WIPVFAD"/>
<dbReference type="PhylomeDB" id="A7SE07"/>
<dbReference type="Proteomes" id="UP000001593">
    <property type="component" value="Unassembled WGS sequence"/>
</dbReference>
<dbReference type="GO" id="GO:0005829">
    <property type="term" value="C:cytosol"/>
    <property type="evidence" value="ECO:0000318"/>
    <property type="project" value="GO_Central"/>
</dbReference>
<dbReference type="GO" id="GO:0051539">
    <property type="term" value="F:4 iron, 4 sulfur cluster binding"/>
    <property type="evidence" value="ECO:0007669"/>
    <property type="project" value="UniProtKB-UniRule"/>
</dbReference>
<dbReference type="GO" id="GO:0005524">
    <property type="term" value="F:ATP binding"/>
    <property type="evidence" value="ECO:0007669"/>
    <property type="project" value="UniProtKB-KW"/>
</dbReference>
<dbReference type="GO" id="GO:0140663">
    <property type="term" value="F:ATP-dependent FeS chaperone activity"/>
    <property type="evidence" value="ECO:0007669"/>
    <property type="project" value="InterPro"/>
</dbReference>
<dbReference type="GO" id="GO:0051536">
    <property type="term" value="F:iron-sulfur cluster binding"/>
    <property type="evidence" value="ECO:0000318"/>
    <property type="project" value="GO_Central"/>
</dbReference>
<dbReference type="GO" id="GO:0046872">
    <property type="term" value="F:metal ion binding"/>
    <property type="evidence" value="ECO:0007669"/>
    <property type="project" value="UniProtKB-KW"/>
</dbReference>
<dbReference type="GO" id="GO:0016226">
    <property type="term" value="P:iron-sulfur cluster assembly"/>
    <property type="evidence" value="ECO:0000318"/>
    <property type="project" value="GO_Central"/>
</dbReference>
<dbReference type="CDD" id="cd02037">
    <property type="entry name" value="Mrp_NBP35"/>
    <property type="match status" value="1"/>
</dbReference>
<dbReference type="FunFam" id="3.40.50.300:FF:000796">
    <property type="entry name" value="Cytosolic Fe-S cluster assembly factor NUBP2"/>
    <property type="match status" value="1"/>
</dbReference>
<dbReference type="Gene3D" id="3.40.50.300">
    <property type="entry name" value="P-loop containing nucleotide triphosphate hydrolases"/>
    <property type="match status" value="1"/>
</dbReference>
<dbReference type="HAMAP" id="MF_02040">
    <property type="entry name" value="Mrp_NBP35"/>
    <property type="match status" value="1"/>
</dbReference>
<dbReference type="HAMAP" id="MF_03039">
    <property type="entry name" value="NUBP2"/>
    <property type="match status" value="1"/>
</dbReference>
<dbReference type="InterPro" id="IPR000808">
    <property type="entry name" value="Mrp-like_CS"/>
</dbReference>
<dbReference type="InterPro" id="IPR019591">
    <property type="entry name" value="Mrp/NBP35_ATP-bd"/>
</dbReference>
<dbReference type="InterPro" id="IPR028600">
    <property type="entry name" value="NUBP2/Cfd1_eukaryotes"/>
</dbReference>
<dbReference type="InterPro" id="IPR027417">
    <property type="entry name" value="P-loop_NTPase"/>
</dbReference>
<dbReference type="InterPro" id="IPR033756">
    <property type="entry name" value="YlxH/NBP35"/>
</dbReference>
<dbReference type="PANTHER" id="PTHR23264:SF19">
    <property type="entry name" value="CYTOSOLIC FE-S CLUSTER ASSEMBLY FACTOR NUBP2"/>
    <property type="match status" value="1"/>
</dbReference>
<dbReference type="PANTHER" id="PTHR23264">
    <property type="entry name" value="NUCLEOTIDE-BINDING PROTEIN NBP35 YEAST -RELATED"/>
    <property type="match status" value="1"/>
</dbReference>
<dbReference type="Pfam" id="PF10609">
    <property type="entry name" value="ParA"/>
    <property type="match status" value="1"/>
</dbReference>
<dbReference type="SUPFAM" id="SSF52540">
    <property type="entry name" value="P-loop containing nucleoside triphosphate hydrolases"/>
    <property type="match status" value="1"/>
</dbReference>
<dbReference type="PROSITE" id="PS01215">
    <property type="entry name" value="MRP"/>
    <property type="match status" value="1"/>
</dbReference>
<comment type="function">
    <text evidence="1">Component of the cytosolic iron-sulfur (Fe/S) protein assembly (CIA) machinery. Required for maturation of extramitochondrial Fe-S proteins. The NUBP1-NUBP2 heterotetramer forms a Fe-S scaffold complex, mediating the de novo assembly of an Fe-S cluster and its transfer to target apoproteins.</text>
</comment>
<comment type="cofactor">
    <cofactor evidence="1">
        <name>[4Fe-4S] cluster</name>
        <dbReference type="ChEBI" id="CHEBI:49883"/>
    </cofactor>
    <text evidence="1">Binds 4 [4Fe-4S] clusters per heterotetramer. Contains two stable clusters in the N-termini of NUBP1 and two labile, bridging clusters between subunits of the NUBP1-NUBP2 heterotetramer.</text>
</comment>
<comment type="subunit">
    <text evidence="1">Heterotetramer of 2 NUBP1 and 2 NUBP2 chains.</text>
</comment>
<comment type="subcellular location">
    <subcellularLocation>
        <location evidence="1">Cytoplasm</location>
    </subcellularLocation>
</comment>
<comment type="similarity">
    <text evidence="1">Belongs to the Mrp/NBP35 ATP-binding proteins family. NUBP2/CFD1 subfamily.</text>
</comment>
<reference key="1">
    <citation type="journal article" date="2007" name="Science">
        <title>Sea anemone genome reveals ancestral eumetazoan gene repertoire and genomic organization.</title>
        <authorList>
            <person name="Putnam N.H."/>
            <person name="Srivastava M."/>
            <person name="Hellsten U."/>
            <person name="Dirks B."/>
            <person name="Chapman J."/>
            <person name="Salamov A."/>
            <person name="Terry A."/>
            <person name="Shapiro H."/>
            <person name="Lindquist E."/>
            <person name="Kapitonov V.V."/>
            <person name="Jurka J."/>
            <person name="Genikhovich G."/>
            <person name="Grigoriev I.V."/>
            <person name="Lucas S.M."/>
            <person name="Steele R.E."/>
            <person name="Finnerty J.R."/>
            <person name="Technau U."/>
            <person name="Martindale M.Q."/>
            <person name="Rokhsar D.S."/>
        </authorList>
    </citation>
    <scope>NUCLEOTIDE SEQUENCE [LARGE SCALE GENOMIC DNA]</scope>
    <source>
        <strain>CH2 X CH6</strain>
    </source>
</reference>
<accession>A7SE07</accession>
<keyword id="KW-0004">4Fe-4S</keyword>
<keyword id="KW-0067">ATP-binding</keyword>
<keyword id="KW-0963">Cytoplasm</keyword>
<keyword id="KW-0408">Iron</keyword>
<keyword id="KW-0411">Iron-sulfur</keyword>
<keyword id="KW-0479">Metal-binding</keyword>
<keyword id="KW-0547">Nucleotide-binding</keyword>
<keyword id="KW-1185">Reference proteome</keyword>